<sequence>MLGSSLRIFSPRAVSRLSFSTTSVEKAEKLWENPWKHALPEKSRSLATVEEAPIDWSYVERLMPIEVVPNVPEHEKYPTPSGWTPPTEAAKTHQYYIRRRHDHLLPLYLERKRDLLNEKTLDFDYVELVTIRNVDGDIFACENDLRSYLEEHLGHSIASHVDELKGRIKIKGAPRVLIEQFFYSKGF</sequence>
<feature type="chain" id="PRO_0000207668" description="Large ribosomal subunit protein mL49">
    <location>
        <begin position="1"/>
        <end position="187"/>
    </location>
</feature>
<reference key="1">
    <citation type="journal article" date="1998" name="Science">
        <title>Genome sequence of the nematode C. elegans: a platform for investigating biology.</title>
        <authorList>
            <consortium name="The C. elegans sequencing consortium"/>
        </authorList>
    </citation>
    <scope>NUCLEOTIDE SEQUENCE [LARGE SCALE GENOMIC DNA]</scope>
    <source>
        <strain>Bristol N2</strain>
    </source>
</reference>
<keyword id="KW-0496">Mitochondrion</keyword>
<keyword id="KW-1185">Reference proteome</keyword>
<keyword id="KW-0687">Ribonucleoprotein</keyword>
<keyword id="KW-0689">Ribosomal protein</keyword>
<proteinExistence type="inferred from homology"/>
<name>RM49_CAEEL</name>
<dbReference type="EMBL" id="Z75547">
    <property type="protein sequence ID" value="CAA99906.2"/>
    <property type="molecule type" value="Genomic_DNA"/>
</dbReference>
<dbReference type="PIR" id="T24188">
    <property type="entry name" value="T24188"/>
</dbReference>
<dbReference type="RefSeq" id="NP_506179.2">
    <property type="nucleotide sequence ID" value="NM_073778.6"/>
</dbReference>
<dbReference type="SMR" id="Q21939"/>
<dbReference type="BioGRID" id="52491">
    <property type="interactions" value="8"/>
</dbReference>
<dbReference type="FunCoup" id="Q21939">
    <property type="interactions" value="2490"/>
</dbReference>
<dbReference type="STRING" id="6239.R11D1.9.1"/>
<dbReference type="PaxDb" id="6239-R11D1.9"/>
<dbReference type="PeptideAtlas" id="Q21939"/>
<dbReference type="EnsemblMetazoa" id="R11D1.9.1">
    <property type="protein sequence ID" value="R11D1.9.1"/>
    <property type="gene ID" value="WBGene00011247"/>
</dbReference>
<dbReference type="GeneID" id="187809"/>
<dbReference type="KEGG" id="cel:CELE_R11D1.9"/>
<dbReference type="UCSC" id="R11D1.9">
    <property type="organism name" value="c. elegans"/>
</dbReference>
<dbReference type="AGR" id="WB:WBGene00011247"/>
<dbReference type="CTD" id="187809"/>
<dbReference type="WormBase" id="R11D1.9">
    <property type="protein sequence ID" value="CE40109"/>
    <property type="gene ID" value="WBGene00011247"/>
    <property type="gene designation" value="mrpl-49"/>
</dbReference>
<dbReference type="eggNOG" id="KOG4034">
    <property type="taxonomic scope" value="Eukaryota"/>
</dbReference>
<dbReference type="GeneTree" id="ENSGT00390000017253"/>
<dbReference type="HOGENOM" id="CLU_085757_2_1_1"/>
<dbReference type="InParanoid" id="Q21939"/>
<dbReference type="OMA" id="NPPEWKY"/>
<dbReference type="OrthoDB" id="19439at2759"/>
<dbReference type="PhylomeDB" id="Q21939"/>
<dbReference type="Reactome" id="R-CEL-5389840">
    <property type="pathway name" value="Mitochondrial translation elongation"/>
</dbReference>
<dbReference type="Reactome" id="R-CEL-5419276">
    <property type="pathway name" value="Mitochondrial translation termination"/>
</dbReference>
<dbReference type="PRO" id="PR:Q21939"/>
<dbReference type="Proteomes" id="UP000001940">
    <property type="component" value="Chromosome V"/>
</dbReference>
<dbReference type="Bgee" id="WBGene00011247">
    <property type="expression patterns" value="Expressed in germ line (C elegans) and 4 other cell types or tissues"/>
</dbReference>
<dbReference type="GO" id="GO:0005762">
    <property type="term" value="C:mitochondrial large ribosomal subunit"/>
    <property type="evidence" value="ECO:0000250"/>
    <property type="project" value="UniProtKB"/>
</dbReference>
<dbReference type="GO" id="GO:0003735">
    <property type="term" value="F:structural constituent of ribosome"/>
    <property type="evidence" value="ECO:0000318"/>
    <property type="project" value="GO_Central"/>
</dbReference>
<dbReference type="GO" id="GO:0006412">
    <property type="term" value="P:translation"/>
    <property type="evidence" value="ECO:0007669"/>
    <property type="project" value="InterPro"/>
</dbReference>
<dbReference type="FunFam" id="3.30.780.10:FF:000009">
    <property type="entry name" value="39S ribosomal protein L49, mitochondrial"/>
    <property type="match status" value="1"/>
</dbReference>
<dbReference type="Gene3D" id="3.30.780.10">
    <property type="entry name" value="SUI1-like domain"/>
    <property type="match status" value="1"/>
</dbReference>
<dbReference type="InterPro" id="IPR007740">
    <property type="entry name" value="Ribosomal_mL49"/>
</dbReference>
<dbReference type="PANTHER" id="PTHR13477:SF0">
    <property type="entry name" value="LARGE RIBOSOMAL SUBUNIT PROTEIN ML49"/>
    <property type="match status" value="1"/>
</dbReference>
<dbReference type="PANTHER" id="PTHR13477">
    <property type="entry name" value="MITOCHONDRIAL 39S RIBOSOMAL PROTEIN L49"/>
    <property type="match status" value="1"/>
</dbReference>
<dbReference type="Pfam" id="PF05046">
    <property type="entry name" value="Img2"/>
    <property type="match status" value="1"/>
</dbReference>
<comment type="subcellular location">
    <subcellularLocation>
        <location evidence="1">Mitochondrion</location>
    </subcellularLocation>
</comment>
<comment type="similarity">
    <text evidence="2">Belongs to the mitochondrion-specific ribosomal protein mL49 family.</text>
</comment>
<evidence type="ECO:0000250" key="1"/>
<evidence type="ECO:0000305" key="2"/>
<organism>
    <name type="scientific">Caenorhabditis elegans</name>
    <dbReference type="NCBI Taxonomy" id="6239"/>
    <lineage>
        <taxon>Eukaryota</taxon>
        <taxon>Metazoa</taxon>
        <taxon>Ecdysozoa</taxon>
        <taxon>Nematoda</taxon>
        <taxon>Chromadorea</taxon>
        <taxon>Rhabditida</taxon>
        <taxon>Rhabditina</taxon>
        <taxon>Rhabditomorpha</taxon>
        <taxon>Rhabditoidea</taxon>
        <taxon>Rhabditidae</taxon>
        <taxon>Peloderinae</taxon>
        <taxon>Caenorhabditis</taxon>
    </lineage>
</organism>
<protein>
    <recommendedName>
        <fullName evidence="2">Large ribosomal subunit protein mL49</fullName>
    </recommendedName>
    <alternativeName>
        <fullName evidence="2">39S ribosomal protein L49, mitochondrial</fullName>
        <shortName>L49mt</shortName>
        <shortName>MRP-L49</shortName>
    </alternativeName>
</protein>
<gene>
    <name type="primary">mrpl-49</name>
    <name type="ORF">R11D1.9</name>
</gene>
<accession>Q21939</accession>